<evidence type="ECO:0000255" key="1">
    <source>
        <dbReference type="HAMAP-Rule" id="MF_00230"/>
    </source>
</evidence>
<protein>
    <recommendedName>
        <fullName evidence="1">Nicotinate-nucleotide--dimethylbenzimidazole phosphoribosyltransferase</fullName>
        <shortName evidence="1">NN:DBI PRT</shortName>
        <ecNumber evidence="1">2.4.2.21</ecNumber>
    </recommendedName>
    <alternativeName>
        <fullName evidence="1">N(1)-alpha-phosphoribosyltransferase</fullName>
    </alternativeName>
</protein>
<organism>
    <name type="scientific">Xanthomonas axonopodis pv. citri (strain 306)</name>
    <dbReference type="NCBI Taxonomy" id="190486"/>
    <lineage>
        <taxon>Bacteria</taxon>
        <taxon>Pseudomonadati</taxon>
        <taxon>Pseudomonadota</taxon>
        <taxon>Gammaproteobacteria</taxon>
        <taxon>Lysobacterales</taxon>
        <taxon>Lysobacteraceae</taxon>
        <taxon>Xanthomonas</taxon>
    </lineage>
</organism>
<accession>Q8PHR3</accession>
<dbReference type="EC" id="2.4.2.21" evidence="1"/>
<dbReference type="EMBL" id="AE008923">
    <property type="protein sequence ID" value="AAM38030.1"/>
    <property type="molecule type" value="Genomic_DNA"/>
</dbReference>
<dbReference type="RefSeq" id="WP_011052091.1">
    <property type="nucleotide sequence ID" value="NC_003919.1"/>
</dbReference>
<dbReference type="SMR" id="Q8PHR3"/>
<dbReference type="GeneID" id="66912250"/>
<dbReference type="KEGG" id="xac:XAC3186"/>
<dbReference type="eggNOG" id="COG2038">
    <property type="taxonomic scope" value="Bacteria"/>
</dbReference>
<dbReference type="HOGENOM" id="CLU_002982_0_1_6"/>
<dbReference type="UniPathway" id="UPA00061">
    <property type="reaction ID" value="UER00516"/>
</dbReference>
<dbReference type="Proteomes" id="UP000000576">
    <property type="component" value="Chromosome"/>
</dbReference>
<dbReference type="GO" id="GO:0008939">
    <property type="term" value="F:nicotinate-nucleotide-dimethylbenzimidazole phosphoribosyltransferase activity"/>
    <property type="evidence" value="ECO:0007669"/>
    <property type="project" value="UniProtKB-UniRule"/>
</dbReference>
<dbReference type="GO" id="GO:0009236">
    <property type="term" value="P:cobalamin biosynthetic process"/>
    <property type="evidence" value="ECO:0007669"/>
    <property type="project" value="UniProtKB-KW"/>
</dbReference>
<dbReference type="CDD" id="cd02439">
    <property type="entry name" value="DMB-PRT_CobT"/>
    <property type="match status" value="1"/>
</dbReference>
<dbReference type="FunFam" id="3.40.50.10210:FF:000001">
    <property type="entry name" value="Nicotinate-nucleotide--dimethylbenzimidazole phosphoribosyltransferase"/>
    <property type="match status" value="1"/>
</dbReference>
<dbReference type="Gene3D" id="1.10.1610.10">
    <property type="match status" value="1"/>
</dbReference>
<dbReference type="Gene3D" id="3.40.50.10210">
    <property type="match status" value="1"/>
</dbReference>
<dbReference type="HAMAP" id="MF_00230">
    <property type="entry name" value="CobT"/>
    <property type="match status" value="1"/>
</dbReference>
<dbReference type="InterPro" id="IPR003200">
    <property type="entry name" value="Nict_dMeBzImd_PRibTrfase"/>
</dbReference>
<dbReference type="InterPro" id="IPR017846">
    <property type="entry name" value="Nict_dMeBzImd_PRibTrfase_bact"/>
</dbReference>
<dbReference type="InterPro" id="IPR023195">
    <property type="entry name" value="Nict_dMeBzImd_PRibTrfase_N"/>
</dbReference>
<dbReference type="InterPro" id="IPR036087">
    <property type="entry name" value="Nict_dMeBzImd_PRibTrfase_sf"/>
</dbReference>
<dbReference type="NCBIfam" id="TIGR03160">
    <property type="entry name" value="cobT_DBIPRT"/>
    <property type="match status" value="1"/>
</dbReference>
<dbReference type="NCBIfam" id="NF000996">
    <property type="entry name" value="PRK00105.1"/>
    <property type="match status" value="1"/>
</dbReference>
<dbReference type="PANTHER" id="PTHR43463">
    <property type="entry name" value="NICOTINATE-NUCLEOTIDE--DIMETHYLBENZIMIDAZOLE PHOSPHORIBOSYLTRANSFERASE"/>
    <property type="match status" value="1"/>
</dbReference>
<dbReference type="PANTHER" id="PTHR43463:SF1">
    <property type="entry name" value="NICOTINATE-NUCLEOTIDE--DIMETHYLBENZIMIDAZOLE PHOSPHORIBOSYLTRANSFERASE"/>
    <property type="match status" value="1"/>
</dbReference>
<dbReference type="Pfam" id="PF02277">
    <property type="entry name" value="DBI_PRT"/>
    <property type="match status" value="1"/>
</dbReference>
<dbReference type="SUPFAM" id="SSF52733">
    <property type="entry name" value="Nicotinate mononucleotide:5,6-dimethylbenzimidazole phosphoribosyltransferase (CobT)"/>
    <property type="match status" value="1"/>
</dbReference>
<gene>
    <name evidence="1" type="primary">cobT</name>
    <name type="ordered locus">XAC3186</name>
</gene>
<sequence>MRSDWIFGACAVPDARMRSAALARQEQLTKPPGALGRLEHLAVQLAAWQRTERPGAQRVWIAVYAADHGVAAEGVSAFPQAVTGEMVRNFARGGAAIAVLARELGARLEVVNLGVVNDPGDLPRVRRAWIAPSSANICEQPAMTATQLRDAIAAGADSIAQARSCDTQLFVGGEMGIGNTTSAAALACALLSQFPQAMAGAGTGLDAEGIAHKATVITRALALHADASSPLERLRRLGGFEIAALVGAYIAAAQAGIPVLVDGFITTAAALVATRLNPGVREWLLFGHRSQERGHAALLRALDAEPLLQLDLRLGEASGAAVAIPLLRSACALHNGMATFAEAGVSDA</sequence>
<comment type="function">
    <text evidence="1">Catalyzes the synthesis of alpha-ribazole-5'-phosphate from nicotinate mononucleotide (NAMN) and 5,6-dimethylbenzimidazole (DMB).</text>
</comment>
<comment type="catalytic activity">
    <reaction evidence="1">
        <text>5,6-dimethylbenzimidazole + nicotinate beta-D-ribonucleotide = alpha-ribazole 5'-phosphate + nicotinate + H(+)</text>
        <dbReference type="Rhea" id="RHEA:11196"/>
        <dbReference type="ChEBI" id="CHEBI:15378"/>
        <dbReference type="ChEBI" id="CHEBI:15890"/>
        <dbReference type="ChEBI" id="CHEBI:32544"/>
        <dbReference type="ChEBI" id="CHEBI:57502"/>
        <dbReference type="ChEBI" id="CHEBI:57918"/>
        <dbReference type="EC" id="2.4.2.21"/>
    </reaction>
</comment>
<comment type="pathway">
    <text evidence="1">Nucleoside biosynthesis; alpha-ribazole biosynthesis; alpha-ribazole from 5,6-dimethylbenzimidazole: step 1/2.</text>
</comment>
<comment type="similarity">
    <text evidence="1">Belongs to the CobT family.</text>
</comment>
<keyword id="KW-0169">Cobalamin biosynthesis</keyword>
<keyword id="KW-0328">Glycosyltransferase</keyword>
<keyword id="KW-0808">Transferase</keyword>
<reference key="1">
    <citation type="journal article" date="2002" name="Nature">
        <title>Comparison of the genomes of two Xanthomonas pathogens with differing host specificities.</title>
        <authorList>
            <person name="da Silva A.C.R."/>
            <person name="Ferro J.A."/>
            <person name="Reinach F.C."/>
            <person name="Farah C.S."/>
            <person name="Furlan L.R."/>
            <person name="Quaggio R.B."/>
            <person name="Monteiro-Vitorello C.B."/>
            <person name="Van Sluys M.A."/>
            <person name="Almeida N.F. Jr."/>
            <person name="Alves L.M.C."/>
            <person name="do Amaral A.M."/>
            <person name="Bertolini M.C."/>
            <person name="Camargo L.E.A."/>
            <person name="Camarotte G."/>
            <person name="Cannavan F."/>
            <person name="Cardozo J."/>
            <person name="Chambergo F."/>
            <person name="Ciapina L.P."/>
            <person name="Cicarelli R.M.B."/>
            <person name="Coutinho L.L."/>
            <person name="Cursino-Santos J.R."/>
            <person name="El-Dorry H."/>
            <person name="Faria J.B."/>
            <person name="Ferreira A.J.S."/>
            <person name="Ferreira R.C.C."/>
            <person name="Ferro M.I.T."/>
            <person name="Formighieri E.F."/>
            <person name="Franco M.C."/>
            <person name="Greggio C.C."/>
            <person name="Gruber A."/>
            <person name="Katsuyama A.M."/>
            <person name="Kishi L.T."/>
            <person name="Leite R.P."/>
            <person name="Lemos E.G.M."/>
            <person name="Lemos M.V.F."/>
            <person name="Locali E.C."/>
            <person name="Machado M.A."/>
            <person name="Madeira A.M.B.N."/>
            <person name="Martinez-Rossi N.M."/>
            <person name="Martins E.C."/>
            <person name="Meidanis J."/>
            <person name="Menck C.F.M."/>
            <person name="Miyaki C.Y."/>
            <person name="Moon D.H."/>
            <person name="Moreira L.M."/>
            <person name="Novo M.T.M."/>
            <person name="Okura V.K."/>
            <person name="Oliveira M.C."/>
            <person name="Oliveira V.R."/>
            <person name="Pereira H.A."/>
            <person name="Rossi A."/>
            <person name="Sena J.A.D."/>
            <person name="Silva C."/>
            <person name="de Souza R.F."/>
            <person name="Spinola L.A.F."/>
            <person name="Takita M.A."/>
            <person name="Tamura R.E."/>
            <person name="Teixeira E.C."/>
            <person name="Tezza R.I.D."/>
            <person name="Trindade dos Santos M."/>
            <person name="Truffi D."/>
            <person name="Tsai S.M."/>
            <person name="White F.F."/>
            <person name="Setubal J.C."/>
            <person name="Kitajima J.P."/>
        </authorList>
    </citation>
    <scope>NUCLEOTIDE SEQUENCE [LARGE SCALE GENOMIC DNA]</scope>
    <source>
        <strain>306</strain>
    </source>
</reference>
<proteinExistence type="inferred from homology"/>
<name>COBT_XANAC</name>
<feature type="chain" id="PRO_0000167079" description="Nicotinate-nucleotide--dimethylbenzimidazole phosphoribosyltransferase">
    <location>
        <begin position="1"/>
        <end position="348"/>
    </location>
</feature>
<feature type="active site" description="Proton acceptor" evidence="1">
    <location>
        <position position="316"/>
    </location>
</feature>